<organism>
    <name type="scientific">Streptococcus pneumoniae (strain ATCC 700669 / Spain 23F-1)</name>
    <dbReference type="NCBI Taxonomy" id="561276"/>
    <lineage>
        <taxon>Bacteria</taxon>
        <taxon>Bacillati</taxon>
        <taxon>Bacillota</taxon>
        <taxon>Bacilli</taxon>
        <taxon>Lactobacillales</taxon>
        <taxon>Streptococcaceae</taxon>
        <taxon>Streptococcus</taxon>
    </lineage>
</organism>
<sequence>MNNLIKSKLELLPTSPGCYIHKDKNGTIIYVGKAKNLRNRVRSYFRGSHDTKTEALVSEIVDFEFIVTESNIEALLLEINLIKENKPKYNIMLKDDKSYPFIKITNERYPRLIITRQVKKDGGLYFGPYPDVGAANEIKRLLDRIFPFRKCTNPPSKVCFYYHIGQCMAHTICKKDEIYFKSMAQEVSDFLKGQDNKIIDELKGKMAAAAQTMEFERAAEYRDLIQAIGTLRTKQRVMAKDLQNRDVFGYYVDKGWMCVQVFFVRQGKLIERDVNLFPYFNDPDEDFLTYVGQFYQEKSHLVPNEVLIPQDIDEEAVKALVDSKILKPQRGEKKQLVNLAIKNARVSLEQKFNLLEKSVEKTQGAIENLGRLLQIPTPVRIESFDNSNIMGTSPVSAMVVFVNGKPSKKDYRKYKIKTVVGPDDYASMREVIRRRYGRVQREALTPPDLIVIDGGQGQVNIAKQVIQEELGLDIPIAGLQKNDKHQTHELLFGDPLEVVDLSRNSQEFFLLQRIQDEVHRFAITFHRQLRSKNSFSSQLDGIDGLGPKRKQNLMRHFKSLTKIKEASVDEIVEVGVPRAVAEAVQTKLNPQETEILLQVAEERVDYQTEGNHNKP</sequence>
<proteinExistence type="inferred from homology"/>
<accession>B8ZMK5</accession>
<evidence type="ECO:0000255" key="1">
    <source>
        <dbReference type="HAMAP-Rule" id="MF_00203"/>
    </source>
</evidence>
<comment type="function">
    <text evidence="1">The UvrABC repair system catalyzes the recognition and processing of DNA lesions. UvrC both incises the 5' and 3' sides of the lesion. The N-terminal half is responsible for the 3' incision and the C-terminal half is responsible for the 5' incision.</text>
</comment>
<comment type="subunit">
    <text evidence="1">Interacts with UvrB in an incision complex.</text>
</comment>
<comment type="subcellular location">
    <subcellularLocation>
        <location evidence="1">Cytoplasm</location>
    </subcellularLocation>
</comment>
<comment type="similarity">
    <text evidence="1">Belongs to the UvrC family.</text>
</comment>
<keyword id="KW-0963">Cytoplasm</keyword>
<keyword id="KW-0227">DNA damage</keyword>
<keyword id="KW-0228">DNA excision</keyword>
<keyword id="KW-0234">DNA repair</keyword>
<keyword id="KW-0267">Excision nuclease</keyword>
<keyword id="KW-0742">SOS response</keyword>
<protein>
    <recommendedName>
        <fullName evidence="1">UvrABC system protein C</fullName>
        <shortName evidence="1">Protein UvrC</shortName>
    </recommendedName>
    <alternativeName>
        <fullName evidence="1">Excinuclease ABC subunit C</fullName>
    </alternativeName>
</protein>
<name>UVRC_STRPJ</name>
<feature type="chain" id="PRO_1000200603" description="UvrABC system protein C">
    <location>
        <begin position="1"/>
        <end position="615"/>
    </location>
</feature>
<feature type="domain" description="GIY-YIG" evidence="1">
    <location>
        <begin position="14"/>
        <end position="91"/>
    </location>
</feature>
<feature type="domain" description="UVR" evidence="1">
    <location>
        <begin position="196"/>
        <end position="231"/>
    </location>
</feature>
<dbReference type="EMBL" id="FM211187">
    <property type="protein sequence ID" value="CAR68406.1"/>
    <property type="molecule type" value="Genomic_DNA"/>
</dbReference>
<dbReference type="RefSeq" id="WP_001061144.1">
    <property type="nucleotide sequence ID" value="NC_011900.1"/>
</dbReference>
<dbReference type="SMR" id="B8ZMK5"/>
<dbReference type="KEGG" id="sne:SPN23F05570"/>
<dbReference type="HOGENOM" id="CLU_014841_3_2_9"/>
<dbReference type="GO" id="GO:0005737">
    <property type="term" value="C:cytoplasm"/>
    <property type="evidence" value="ECO:0007669"/>
    <property type="project" value="UniProtKB-SubCell"/>
</dbReference>
<dbReference type="GO" id="GO:0009380">
    <property type="term" value="C:excinuclease repair complex"/>
    <property type="evidence" value="ECO:0007669"/>
    <property type="project" value="InterPro"/>
</dbReference>
<dbReference type="GO" id="GO:0003677">
    <property type="term" value="F:DNA binding"/>
    <property type="evidence" value="ECO:0007669"/>
    <property type="project" value="UniProtKB-UniRule"/>
</dbReference>
<dbReference type="GO" id="GO:0009381">
    <property type="term" value="F:excinuclease ABC activity"/>
    <property type="evidence" value="ECO:0007669"/>
    <property type="project" value="UniProtKB-UniRule"/>
</dbReference>
<dbReference type="GO" id="GO:0006289">
    <property type="term" value="P:nucleotide-excision repair"/>
    <property type="evidence" value="ECO:0007669"/>
    <property type="project" value="UniProtKB-UniRule"/>
</dbReference>
<dbReference type="GO" id="GO:0009432">
    <property type="term" value="P:SOS response"/>
    <property type="evidence" value="ECO:0007669"/>
    <property type="project" value="UniProtKB-UniRule"/>
</dbReference>
<dbReference type="CDD" id="cd10434">
    <property type="entry name" value="GIY-YIG_UvrC_Cho"/>
    <property type="match status" value="1"/>
</dbReference>
<dbReference type="FunFam" id="1.10.150.20:FF:000005">
    <property type="entry name" value="UvrABC system protein C"/>
    <property type="match status" value="1"/>
</dbReference>
<dbReference type="FunFam" id="3.30.420.340:FF:000002">
    <property type="entry name" value="UvrABC system protein C"/>
    <property type="match status" value="1"/>
</dbReference>
<dbReference type="FunFam" id="3.40.1440.10:FF:000001">
    <property type="entry name" value="UvrABC system protein C"/>
    <property type="match status" value="1"/>
</dbReference>
<dbReference type="FunFam" id="4.10.860.10:FF:000007">
    <property type="entry name" value="UvrABC system protein C"/>
    <property type="match status" value="1"/>
</dbReference>
<dbReference type="Gene3D" id="1.10.150.20">
    <property type="entry name" value="5' to 3' exonuclease, C-terminal subdomain"/>
    <property type="match status" value="1"/>
</dbReference>
<dbReference type="Gene3D" id="3.40.1440.10">
    <property type="entry name" value="GIY-YIG endonuclease"/>
    <property type="match status" value="1"/>
</dbReference>
<dbReference type="Gene3D" id="4.10.860.10">
    <property type="entry name" value="UVR domain"/>
    <property type="match status" value="1"/>
</dbReference>
<dbReference type="Gene3D" id="3.30.420.340">
    <property type="entry name" value="UvrC, RNAse H endonuclease domain"/>
    <property type="match status" value="1"/>
</dbReference>
<dbReference type="HAMAP" id="MF_00203">
    <property type="entry name" value="UvrC"/>
    <property type="match status" value="1"/>
</dbReference>
<dbReference type="InterPro" id="IPR000305">
    <property type="entry name" value="GIY-YIG_endonuc"/>
</dbReference>
<dbReference type="InterPro" id="IPR035901">
    <property type="entry name" value="GIY-YIG_endonuc_sf"/>
</dbReference>
<dbReference type="InterPro" id="IPR047296">
    <property type="entry name" value="GIY-YIG_UvrC_Cho"/>
</dbReference>
<dbReference type="InterPro" id="IPR010994">
    <property type="entry name" value="RuvA_2-like"/>
</dbReference>
<dbReference type="InterPro" id="IPR001943">
    <property type="entry name" value="UVR_dom"/>
</dbReference>
<dbReference type="InterPro" id="IPR036876">
    <property type="entry name" value="UVR_dom_sf"/>
</dbReference>
<dbReference type="InterPro" id="IPR050066">
    <property type="entry name" value="UvrABC_protein_C"/>
</dbReference>
<dbReference type="InterPro" id="IPR004791">
    <property type="entry name" value="UvrC"/>
</dbReference>
<dbReference type="InterPro" id="IPR001162">
    <property type="entry name" value="UvrC_RNase_H_dom"/>
</dbReference>
<dbReference type="InterPro" id="IPR038476">
    <property type="entry name" value="UvrC_RNase_H_dom_sf"/>
</dbReference>
<dbReference type="NCBIfam" id="TIGR00194">
    <property type="entry name" value="uvrC"/>
    <property type="match status" value="1"/>
</dbReference>
<dbReference type="PANTHER" id="PTHR30562:SF1">
    <property type="entry name" value="UVRABC SYSTEM PROTEIN C"/>
    <property type="match status" value="1"/>
</dbReference>
<dbReference type="PANTHER" id="PTHR30562">
    <property type="entry name" value="UVRC/OXIDOREDUCTASE"/>
    <property type="match status" value="1"/>
</dbReference>
<dbReference type="Pfam" id="PF01541">
    <property type="entry name" value="GIY-YIG"/>
    <property type="match status" value="1"/>
</dbReference>
<dbReference type="Pfam" id="PF14520">
    <property type="entry name" value="HHH_5"/>
    <property type="match status" value="1"/>
</dbReference>
<dbReference type="Pfam" id="PF02151">
    <property type="entry name" value="UVR"/>
    <property type="match status" value="1"/>
</dbReference>
<dbReference type="Pfam" id="PF22920">
    <property type="entry name" value="UvrC_RNaseH"/>
    <property type="match status" value="1"/>
</dbReference>
<dbReference type="Pfam" id="PF08459">
    <property type="entry name" value="UvrC_RNaseH_dom"/>
    <property type="match status" value="1"/>
</dbReference>
<dbReference type="SMART" id="SM00465">
    <property type="entry name" value="GIYc"/>
    <property type="match status" value="1"/>
</dbReference>
<dbReference type="SUPFAM" id="SSF46600">
    <property type="entry name" value="C-terminal UvrC-binding domain of UvrB"/>
    <property type="match status" value="1"/>
</dbReference>
<dbReference type="SUPFAM" id="SSF82771">
    <property type="entry name" value="GIY-YIG endonuclease"/>
    <property type="match status" value="1"/>
</dbReference>
<dbReference type="SUPFAM" id="SSF47781">
    <property type="entry name" value="RuvA domain 2-like"/>
    <property type="match status" value="1"/>
</dbReference>
<dbReference type="PROSITE" id="PS50164">
    <property type="entry name" value="GIY_YIG"/>
    <property type="match status" value="1"/>
</dbReference>
<dbReference type="PROSITE" id="PS50151">
    <property type="entry name" value="UVR"/>
    <property type="match status" value="1"/>
</dbReference>
<dbReference type="PROSITE" id="PS50165">
    <property type="entry name" value="UVRC"/>
    <property type="match status" value="1"/>
</dbReference>
<reference key="1">
    <citation type="journal article" date="2009" name="J. Bacteriol.">
        <title>Role of conjugative elements in the evolution of the multidrug-resistant pandemic clone Streptococcus pneumoniae Spain23F ST81.</title>
        <authorList>
            <person name="Croucher N.J."/>
            <person name="Walker D."/>
            <person name="Romero P."/>
            <person name="Lennard N."/>
            <person name="Paterson G.K."/>
            <person name="Bason N.C."/>
            <person name="Mitchell A.M."/>
            <person name="Quail M.A."/>
            <person name="Andrew P.W."/>
            <person name="Parkhill J."/>
            <person name="Bentley S.D."/>
            <person name="Mitchell T.J."/>
        </authorList>
    </citation>
    <scope>NUCLEOTIDE SEQUENCE [LARGE SCALE GENOMIC DNA]</scope>
    <source>
        <strain>ATCC 700669 / Spain 23F-1</strain>
    </source>
</reference>
<gene>
    <name evidence="1" type="primary">uvrC</name>
    <name type="ordered locus">SPN23F05570</name>
</gene>